<geneLocation type="mitochondrion"/>
<dbReference type="EC" id="7.1.1.9"/>
<dbReference type="EMBL" id="AF028219">
    <property type="protein sequence ID" value="AAC00112.1"/>
    <property type="molecule type" value="Genomic_DNA"/>
</dbReference>
<dbReference type="RefSeq" id="YP_009180064.1">
    <property type="nucleotide sequence ID" value="NC_028427.1"/>
</dbReference>
<dbReference type="SMR" id="O47674"/>
<dbReference type="GeneID" id="26219177"/>
<dbReference type="CTD" id="4513"/>
<dbReference type="GO" id="GO:0005743">
    <property type="term" value="C:mitochondrial inner membrane"/>
    <property type="evidence" value="ECO:0007669"/>
    <property type="project" value="UniProtKB-SubCell"/>
</dbReference>
<dbReference type="GO" id="GO:0045277">
    <property type="term" value="C:respiratory chain complex IV"/>
    <property type="evidence" value="ECO:0000250"/>
    <property type="project" value="UniProtKB"/>
</dbReference>
<dbReference type="GO" id="GO:0005507">
    <property type="term" value="F:copper ion binding"/>
    <property type="evidence" value="ECO:0007669"/>
    <property type="project" value="InterPro"/>
</dbReference>
<dbReference type="GO" id="GO:0004129">
    <property type="term" value="F:cytochrome-c oxidase activity"/>
    <property type="evidence" value="ECO:0007669"/>
    <property type="project" value="UniProtKB-EC"/>
</dbReference>
<dbReference type="GO" id="GO:0042773">
    <property type="term" value="P:ATP synthesis coupled electron transport"/>
    <property type="evidence" value="ECO:0007669"/>
    <property type="project" value="TreeGrafter"/>
</dbReference>
<dbReference type="CDD" id="cd13912">
    <property type="entry name" value="CcO_II_C"/>
    <property type="match status" value="1"/>
</dbReference>
<dbReference type="FunFam" id="1.10.287.90:FF:000001">
    <property type="entry name" value="Cytochrome c oxidase subunit 2"/>
    <property type="match status" value="1"/>
</dbReference>
<dbReference type="FunFam" id="2.60.40.420:FF:000001">
    <property type="entry name" value="Cytochrome c oxidase subunit 2"/>
    <property type="match status" value="1"/>
</dbReference>
<dbReference type="Gene3D" id="1.10.287.90">
    <property type="match status" value="1"/>
</dbReference>
<dbReference type="Gene3D" id="2.60.40.420">
    <property type="entry name" value="Cupredoxins - blue copper proteins"/>
    <property type="match status" value="1"/>
</dbReference>
<dbReference type="InterPro" id="IPR045187">
    <property type="entry name" value="CcO_II"/>
</dbReference>
<dbReference type="InterPro" id="IPR002429">
    <property type="entry name" value="CcO_II-like_C"/>
</dbReference>
<dbReference type="InterPro" id="IPR034210">
    <property type="entry name" value="CcO_II_C"/>
</dbReference>
<dbReference type="InterPro" id="IPR001505">
    <property type="entry name" value="Copper_CuA"/>
</dbReference>
<dbReference type="InterPro" id="IPR008972">
    <property type="entry name" value="Cupredoxin"/>
</dbReference>
<dbReference type="InterPro" id="IPR014222">
    <property type="entry name" value="Cyt_c_oxidase_su2"/>
</dbReference>
<dbReference type="InterPro" id="IPR011759">
    <property type="entry name" value="Cyt_c_oxidase_su2_TM_dom"/>
</dbReference>
<dbReference type="InterPro" id="IPR036257">
    <property type="entry name" value="Cyt_c_oxidase_su2_TM_sf"/>
</dbReference>
<dbReference type="NCBIfam" id="TIGR02866">
    <property type="entry name" value="CoxB"/>
    <property type="match status" value="1"/>
</dbReference>
<dbReference type="PANTHER" id="PTHR22888:SF9">
    <property type="entry name" value="CYTOCHROME C OXIDASE SUBUNIT 2"/>
    <property type="match status" value="1"/>
</dbReference>
<dbReference type="PANTHER" id="PTHR22888">
    <property type="entry name" value="CYTOCHROME C OXIDASE, SUBUNIT II"/>
    <property type="match status" value="1"/>
</dbReference>
<dbReference type="Pfam" id="PF00116">
    <property type="entry name" value="COX2"/>
    <property type="match status" value="1"/>
</dbReference>
<dbReference type="Pfam" id="PF02790">
    <property type="entry name" value="COX2_TM"/>
    <property type="match status" value="1"/>
</dbReference>
<dbReference type="PRINTS" id="PR01166">
    <property type="entry name" value="CYCOXIDASEII"/>
</dbReference>
<dbReference type="SUPFAM" id="SSF49503">
    <property type="entry name" value="Cupredoxins"/>
    <property type="match status" value="1"/>
</dbReference>
<dbReference type="SUPFAM" id="SSF81464">
    <property type="entry name" value="Cytochrome c oxidase subunit II-like, transmembrane region"/>
    <property type="match status" value="1"/>
</dbReference>
<dbReference type="PROSITE" id="PS00078">
    <property type="entry name" value="COX2"/>
    <property type="match status" value="1"/>
</dbReference>
<dbReference type="PROSITE" id="PS50857">
    <property type="entry name" value="COX2_CUA"/>
    <property type="match status" value="1"/>
</dbReference>
<dbReference type="PROSITE" id="PS50999">
    <property type="entry name" value="COX2_TM"/>
    <property type="match status" value="1"/>
</dbReference>
<evidence type="ECO:0000250" key="1">
    <source>
        <dbReference type="UniProtKB" id="P00403"/>
    </source>
</evidence>
<evidence type="ECO:0000250" key="2">
    <source>
        <dbReference type="UniProtKB" id="P00406"/>
    </source>
</evidence>
<evidence type="ECO:0000250" key="3">
    <source>
        <dbReference type="UniProtKB" id="P00410"/>
    </source>
</evidence>
<evidence type="ECO:0000250" key="4">
    <source>
        <dbReference type="UniProtKB" id="P68530"/>
    </source>
</evidence>
<evidence type="ECO:0000305" key="5"/>
<sequence length="227" mass="26033">MAYPFQLGLQDATSPIMEELLHFHDHTLMIVFLISSLVLYIISLMLTTKLTHTSTMDAQEVETVWTILPAIILISIALPSLRILYMMDEINNPSLTVKTMGHQWYWSYEYTDYEDLNFDSYMIPTQELKPGELRLLEVDNRVVLPMEMTIRMLVSSEDVLHSWAVPSLGLKTDAIPGRLNQTTLMATRPGLYYGQCSEICGSNHSFMPIVLEMVPLPYFEAWSTLMM</sequence>
<reference key="1">
    <citation type="journal article" date="1997" name="Syst. Biol.">
        <title>Molecular systematics of the Canidae.</title>
        <authorList>
            <person name="Wayne R.K."/>
            <person name="Geffen E."/>
            <person name="Girman D.J."/>
            <person name="Koepfli K.-P."/>
            <person name="Lau L.M."/>
            <person name="Marshall C.R."/>
        </authorList>
    </citation>
    <scope>NUCLEOTIDE SEQUENCE [GENOMIC DNA]</scope>
</reference>
<keyword id="KW-0186">Copper</keyword>
<keyword id="KW-0249">Electron transport</keyword>
<keyword id="KW-0460">Magnesium</keyword>
<keyword id="KW-0472">Membrane</keyword>
<keyword id="KW-0479">Metal-binding</keyword>
<keyword id="KW-0496">Mitochondrion</keyword>
<keyword id="KW-0999">Mitochondrion inner membrane</keyword>
<keyword id="KW-0597">Phosphoprotein</keyword>
<keyword id="KW-0679">Respiratory chain</keyword>
<keyword id="KW-1278">Translocase</keyword>
<keyword id="KW-0812">Transmembrane</keyword>
<keyword id="KW-1133">Transmembrane helix</keyword>
<keyword id="KW-0813">Transport</keyword>
<accession>O47674</accession>
<feature type="chain" id="PRO_0000183624" description="Cytochrome c oxidase subunit 2">
    <location>
        <begin position="1"/>
        <end position="227"/>
    </location>
</feature>
<feature type="topological domain" description="Mitochondrial intermembrane" evidence="4">
    <location>
        <begin position="1"/>
        <end position="14"/>
    </location>
</feature>
<feature type="transmembrane region" description="Helical; Name=I" evidence="4">
    <location>
        <begin position="15"/>
        <end position="45"/>
    </location>
</feature>
<feature type="topological domain" description="Mitochondrial matrix" evidence="4">
    <location>
        <begin position="46"/>
        <end position="59"/>
    </location>
</feature>
<feature type="transmembrane region" description="Helical; Name=II" evidence="4">
    <location>
        <begin position="60"/>
        <end position="87"/>
    </location>
</feature>
<feature type="topological domain" description="Mitochondrial intermembrane" evidence="4">
    <location>
        <begin position="88"/>
        <end position="227"/>
    </location>
</feature>
<feature type="binding site" evidence="4">
    <location>
        <position position="161"/>
    </location>
    <ligand>
        <name>Cu cation</name>
        <dbReference type="ChEBI" id="CHEBI:23378"/>
        <label>A1</label>
    </ligand>
</feature>
<feature type="binding site" evidence="4">
    <location>
        <position position="196"/>
    </location>
    <ligand>
        <name>Cu cation</name>
        <dbReference type="ChEBI" id="CHEBI:23378"/>
        <label>A1</label>
    </ligand>
</feature>
<feature type="binding site" evidence="4">
    <location>
        <position position="196"/>
    </location>
    <ligand>
        <name>Cu cation</name>
        <dbReference type="ChEBI" id="CHEBI:23378"/>
        <label>A2</label>
    </ligand>
</feature>
<feature type="binding site" evidence="4">
    <location>
        <position position="198"/>
    </location>
    <ligand>
        <name>Cu cation</name>
        <dbReference type="ChEBI" id="CHEBI:23378"/>
        <label>A2</label>
    </ligand>
</feature>
<feature type="binding site" evidence="4">
    <location>
        <position position="198"/>
    </location>
    <ligand>
        <name>Mg(2+)</name>
        <dbReference type="ChEBI" id="CHEBI:18420"/>
        <note>ligand shared with MT-CO1</note>
    </ligand>
</feature>
<feature type="binding site" evidence="4">
    <location>
        <position position="200"/>
    </location>
    <ligand>
        <name>Cu cation</name>
        <dbReference type="ChEBI" id="CHEBI:23378"/>
        <label>A1</label>
    </ligand>
</feature>
<feature type="binding site" evidence="4">
    <location>
        <position position="200"/>
    </location>
    <ligand>
        <name>Cu cation</name>
        <dbReference type="ChEBI" id="CHEBI:23378"/>
        <label>A2</label>
    </ligand>
</feature>
<feature type="binding site" evidence="4">
    <location>
        <position position="204"/>
    </location>
    <ligand>
        <name>Cu cation</name>
        <dbReference type="ChEBI" id="CHEBI:23378"/>
        <label>A2</label>
    </ligand>
</feature>
<feature type="binding site" evidence="4">
    <location>
        <position position="207"/>
    </location>
    <ligand>
        <name>Cu cation</name>
        <dbReference type="ChEBI" id="CHEBI:23378"/>
        <label>A1</label>
    </ligand>
</feature>
<feature type="modified residue" description="Phosphotyrosine" evidence="2">
    <location>
        <position position="218"/>
    </location>
</feature>
<name>COX2_LYCPI</name>
<proteinExistence type="inferred from homology"/>
<gene>
    <name type="primary">MT-CO2</name>
    <name type="synonym">COII</name>
    <name type="synonym">COX2</name>
    <name type="synonym">COXII</name>
    <name type="synonym">MTCO2</name>
</gene>
<comment type="function">
    <text evidence="3">Component of the cytochrome c oxidase, the last enzyme in the mitochondrial electron transport chain which drives oxidative phosphorylation. The respiratory chain contains 3 multisubunit complexes succinate dehydrogenase (complex II, CII), ubiquinol-cytochrome c oxidoreductase (cytochrome b-c1 complex, complex III, CIII) and cytochrome c oxidase (complex IV, CIV), that cooperate to transfer electrons derived from NADH and succinate to molecular oxygen, creating an electrochemical gradient over the inner membrane that drives transmembrane transport and the ATP synthase. Cytochrome c oxidase is the component of the respiratory chain that catalyzes the reduction of oxygen to water. Electrons originating from reduced cytochrome c in the intermembrane space (IMS) are transferred via the dinuclear copper A center (CU(A)) of subunit 2 and heme A of subunit 1 to the active site in subunit 1, a binuclear center (BNC) formed by heme A3 and copper B (CU(B)). The BNC reduces molecular oxygen to 2 water molecules using 4 electrons from cytochrome c in the IMS and 4 protons from the mitochondrial matrix.</text>
</comment>
<comment type="catalytic activity">
    <reaction evidence="3">
        <text>4 Fe(II)-[cytochrome c] + O2 + 8 H(+)(in) = 4 Fe(III)-[cytochrome c] + 2 H2O + 4 H(+)(out)</text>
        <dbReference type="Rhea" id="RHEA:11436"/>
        <dbReference type="Rhea" id="RHEA-COMP:10350"/>
        <dbReference type="Rhea" id="RHEA-COMP:14399"/>
        <dbReference type="ChEBI" id="CHEBI:15377"/>
        <dbReference type="ChEBI" id="CHEBI:15378"/>
        <dbReference type="ChEBI" id="CHEBI:15379"/>
        <dbReference type="ChEBI" id="CHEBI:29033"/>
        <dbReference type="ChEBI" id="CHEBI:29034"/>
        <dbReference type="EC" id="7.1.1.9"/>
    </reaction>
    <physiologicalReaction direction="left-to-right" evidence="3">
        <dbReference type="Rhea" id="RHEA:11437"/>
    </physiologicalReaction>
</comment>
<comment type="cofactor">
    <cofactor evidence="4">
        <name>Cu cation</name>
        <dbReference type="ChEBI" id="CHEBI:23378"/>
    </cofactor>
    <text evidence="4">Binds a dinuclear copper A center per subunit.</text>
</comment>
<comment type="subunit">
    <text evidence="1 4">Component of the cytochrome c oxidase (complex IV, CIV), a multisubunit enzyme composed of 14 subunits. The complex is composed of a catalytic core of 3 subunits MT-CO1, MT-CO2 and MT-CO3, encoded in the mitochondrial DNA, and 11 supernumerary subunits COX4I, COX5A, COX5B, COX6A, COX6B, COX6C, COX7A, COX7B, COX7C, COX8 and NDUFA4, which are encoded in the nuclear genome. The complex exists as a monomer or a dimer and forms supercomplexes (SCs) in the inner mitochondrial membrane with NADH-ubiquinone oxidoreductase (complex I, CI) and ubiquinol-cytochrome c oxidoreductase (cytochrome b-c1 complex, complex III, CIII), resulting in different assemblies (supercomplex SCI(1)III(2)IV(1) and megacomplex MCI(2)III(2)IV(2)) (By similarity). Found in a complex with TMEM177, COA6, COX18, COX20, SCO1 and SCO2. Interacts with TMEM177 in a COX20-dependent manner. Interacts with COX20. Interacts with COX16 (By similarity).</text>
</comment>
<comment type="subcellular location">
    <subcellularLocation>
        <location evidence="4">Mitochondrion inner membrane</location>
        <topology evidence="4">Multi-pass membrane protein</topology>
    </subcellularLocation>
</comment>
<comment type="similarity">
    <text evidence="5">Belongs to the cytochrome c oxidase subunit 2 family.</text>
</comment>
<organism>
    <name type="scientific">Lycaon pictus</name>
    <name type="common">African wild dog</name>
    <name type="synonym">Cape hunting dog</name>
    <dbReference type="NCBI Taxonomy" id="9622"/>
    <lineage>
        <taxon>Eukaryota</taxon>
        <taxon>Metazoa</taxon>
        <taxon>Chordata</taxon>
        <taxon>Craniata</taxon>
        <taxon>Vertebrata</taxon>
        <taxon>Euteleostomi</taxon>
        <taxon>Mammalia</taxon>
        <taxon>Eutheria</taxon>
        <taxon>Laurasiatheria</taxon>
        <taxon>Carnivora</taxon>
        <taxon>Caniformia</taxon>
        <taxon>Canidae</taxon>
        <taxon>Lycaon</taxon>
    </lineage>
</organism>
<protein>
    <recommendedName>
        <fullName>Cytochrome c oxidase subunit 2</fullName>
        <ecNumber>7.1.1.9</ecNumber>
    </recommendedName>
    <alternativeName>
        <fullName>Cytochrome c oxidase polypeptide II</fullName>
    </alternativeName>
</protein>